<name>RS8_RHOP2</name>
<protein>
    <recommendedName>
        <fullName evidence="1">Small ribosomal subunit protein uS8</fullName>
    </recommendedName>
    <alternativeName>
        <fullName evidence="2">30S ribosomal protein S8</fullName>
    </alternativeName>
</protein>
<sequence length="132" mass="14627">MSTHDPISDLITRIRNAQMRSKSKVSTPGSRMRASVLEVLKSEGYIRGYASVEHPSGRSELEIELKYFDGEPVIREIERVSRPGRRVYASVKNLPRVNNGLGISVLSTPKGIMADHDARDANVGGEVLFTVF</sequence>
<organism>
    <name type="scientific">Rhodopseudomonas palustris (strain HaA2)</name>
    <dbReference type="NCBI Taxonomy" id="316058"/>
    <lineage>
        <taxon>Bacteria</taxon>
        <taxon>Pseudomonadati</taxon>
        <taxon>Pseudomonadota</taxon>
        <taxon>Alphaproteobacteria</taxon>
        <taxon>Hyphomicrobiales</taxon>
        <taxon>Nitrobacteraceae</taxon>
        <taxon>Rhodopseudomonas</taxon>
    </lineage>
</organism>
<comment type="function">
    <text evidence="1">One of the primary rRNA binding proteins, it binds directly to 16S rRNA central domain where it helps coordinate assembly of the platform of the 30S subunit.</text>
</comment>
<comment type="subunit">
    <text evidence="1">Part of the 30S ribosomal subunit. Contacts proteins S5 and S12.</text>
</comment>
<comment type="similarity">
    <text evidence="1">Belongs to the universal ribosomal protein uS8 family.</text>
</comment>
<keyword id="KW-1185">Reference proteome</keyword>
<keyword id="KW-0687">Ribonucleoprotein</keyword>
<keyword id="KW-0689">Ribosomal protein</keyword>
<keyword id="KW-0694">RNA-binding</keyword>
<keyword id="KW-0699">rRNA-binding</keyword>
<feature type="chain" id="PRO_0000290918" description="Small ribosomal subunit protein uS8">
    <location>
        <begin position="1"/>
        <end position="132"/>
    </location>
</feature>
<evidence type="ECO:0000255" key="1">
    <source>
        <dbReference type="HAMAP-Rule" id="MF_01302"/>
    </source>
</evidence>
<evidence type="ECO:0000305" key="2"/>
<accession>Q2IXP6</accession>
<reference key="1">
    <citation type="submission" date="2006-01" db="EMBL/GenBank/DDBJ databases">
        <title>Complete sequence of Rhodopseudomonas palustris HaA2.</title>
        <authorList>
            <consortium name="US DOE Joint Genome Institute"/>
            <person name="Copeland A."/>
            <person name="Lucas S."/>
            <person name="Lapidus A."/>
            <person name="Barry K."/>
            <person name="Detter J.C."/>
            <person name="Glavina T."/>
            <person name="Hammon N."/>
            <person name="Israni S."/>
            <person name="Pitluck S."/>
            <person name="Chain P."/>
            <person name="Malfatti S."/>
            <person name="Shin M."/>
            <person name="Vergez L."/>
            <person name="Schmutz J."/>
            <person name="Larimer F."/>
            <person name="Land M."/>
            <person name="Hauser L."/>
            <person name="Pelletier D.A."/>
            <person name="Kyrpides N."/>
            <person name="Anderson I."/>
            <person name="Oda Y."/>
            <person name="Harwood C.S."/>
            <person name="Richardson P."/>
        </authorList>
    </citation>
    <scope>NUCLEOTIDE SEQUENCE [LARGE SCALE GENOMIC DNA]</scope>
    <source>
        <strain>HaA2</strain>
    </source>
</reference>
<gene>
    <name evidence="1" type="primary">rpsH</name>
    <name type="ordered locus">RPB_2309</name>
</gene>
<proteinExistence type="inferred from homology"/>
<dbReference type="EMBL" id="CP000250">
    <property type="protein sequence ID" value="ABD07014.1"/>
    <property type="molecule type" value="Genomic_DNA"/>
</dbReference>
<dbReference type="RefSeq" id="WP_011441199.1">
    <property type="nucleotide sequence ID" value="NC_007778.1"/>
</dbReference>
<dbReference type="SMR" id="Q2IXP6"/>
<dbReference type="STRING" id="316058.RPB_2309"/>
<dbReference type="KEGG" id="rpb:RPB_2309"/>
<dbReference type="eggNOG" id="COG0096">
    <property type="taxonomic scope" value="Bacteria"/>
</dbReference>
<dbReference type="HOGENOM" id="CLU_098428_0_0_5"/>
<dbReference type="OrthoDB" id="9802617at2"/>
<dbReference type="Proteomes" id="UP000008809">
    <property type="component" value="Chromosome"/>
</dbReference>
<dbReference type="GO" id="GO:1990904">
    <property type="term" value="C:ribonucleoprotein complex"/>
    <property type="evidence" value="ECO:0007669"/>
    <property type="project" value="UniProtKB-KW"/>
</dbReference>
<dbReference type="GO" id="GO:0005840">
    <property type="term" value="C:ribosome"/>
    <property type="evidence" value="ECO:0007669"/>
    <property type="project" value="UniProtKB-KW"/>
</dbReference>
<dbReference type="GO" id="GO:0019843">
    <property type="term" value="F:rRNA binding"/>
    <property type="evidence" value="ECO:0007669"/>
    <property type="project" value="UniProtKB-UniRule"/>
</dbReference>
<dbReference type="GO" id="GO:0003735">
    <property type="term" value="F:structural constituent of ribosome"/>
    <property type="evidence" value="ECO:0007669"/>
    <property type="project" value="InterPro"/>
</dbReference>
<dbReference type="GO" id="GO:0006412">
    <property type="term" value="P:translation"/>
    <property type="evidence" value="ECO:0007669"/>
    <property type="project" value="UniProtKB-UniRule"/>
</dbReference>
<dbReference type="FunFam" id="3.30.1370.30:FF:000002">
    <property type="entry name" value="30S ribosomal protein S8"/>
    <property type="match status" value="1"/>
</dbReference>
<dbReference type="FunFam" id="3.30.1490.10:FF:000001">
    <property type="entry name" value="30S ribosomal protein S8"/>
    <property type="match status" value="1"/>
</dbReference>
<dbReference type="Gene3D" id="3.30.1370.30">
    <property type="match status" value="1"/>
</dbReference>
<dbReference type="Gene3D" id="3.30.1490.10">
    <property type="match status" value="1"/>
</dbReference>
<dbReference type="HAMAP" id="MF_01302_B">
    <property type="entry name" value="Ribosomal_uS8_B"/>
    <property type="match status" value="1"/>
</dbReference>
<dbReference type="InterPro" id="IPR000630">
    <property type="entry name" value="Ribosomal_uS8"/>
</dbReference>
<dbReference type="InterPro" id="IPR047863">
    <property type="entry name" value="Ribosomal_uS8_CS"/>
</dbReference>
<dbReference type="InterPro" id="IPR035987">
    <property type="entry name" value="Ribosomal_uS8_sf"/>
</dbReference>
<dbReference type="NCBIfam" id="NF001109">
    <property type="entry name" value="PRK00136.1"/>
    <property type="match status" value="1"/>
</dbReference>
<dbReference type="PANTHER" id="PTHR11758">
    <property type="entry name" value="40S RIBOSOMAL PROTEIN S15A"/>
    <property type="match status" value="1"/>
</dbReference>
<dbReference type="Pfam" id="PF00410">
    <property type="entry name" value="Ribosomal_S8"/>
    <property type="match status" value="1"/>
</dbReference>
<dbReference type="SUPFAM" id="SSF56047">
    <property type="entry name" value="Ribosomal protein S8"/>
    <property type="match status" value="1"/>
</dbReference>
<dbReference type="PROSITE" id="PS00053">
    <property type="entry name" value="RIBOSOMAL_S8"/>
    <property type="match status" value="1"/>
</dbReference>